<reference key="1">
    <citation type="journal article" date="2006" name="PLoS Genet.">
        <title>Genome sequence of Rickettsia bellii illuminates the role of amoebae in gene exchanges between intracellular pathogens.</title>
        <authorList>
            <person name="Ogata H."/>
            <person name="La Scola B."/>
            <person name="Audic S."/>
            <person name="Renesto P."/>
            <person name="Blanc G."/>
            <person name="Robert C."/>
            <person name="Fournier P.-E."/>
            <person name="Claverie J.-M."/>
            <person name="Raoult D."/>
        </authorList>
    </citation>
    <scope>NUCLEOTIDE SEQUENCE [LARGE SCALE GENOMIC DNA]</scope>
    <source>
        <strain>RML369-C</strain>
    </source>
</reference>
<name>RECN_RICBR</name>
<dbReference type="EMBL" id="CP000087">
    <property type="protein sequence ID" value="ABE05182.1"/>
    <property type="molecule type" value="Genomic_DNA"/>
</dbReference>
<dbReference type="RefSeq" id="WP_011477760.1">
    <property type="nucleotide sequence ID" value="NC_007940.1"/>
</dbReference>
<dbReference type="SMR" id="Q1RHI2"/>
<dbReference type="KEGG" id="rbe:RBE_1101"/>
<dbReference type="eggNOG" id="COG0497">
    <property type="taxonomic scope" value="Bacteria"/>
</dbReference>
<dbReference type="HOGENOM" id="CLU_018297_3_1_5"/>
<dbReference type="OrthoDB" id="9806954at2"/>
<dbReference type="Proteomes" id="UP000001951">
    <property type="component" value="Chromosome"/>
</dbReference>
<dbReference type="GO" id="GO:0043590">
    <property type="term" value="C:bacterial nucleoid"/>
    <property type="evidence" value="ECO:0007669"/>
    <property type="project" value="TreeGrafter"/>
</dbReference>
<dbReference type="GO" id="GO:0005524">
    <property type="term" value="F:ATP binding"/>
    <property type="evidence" value="ECO:0007669"/>
    <property type="project" value="UniProtKB-KW"/>
</dbReference>
<dbReference type="GO" id="GO:0006310">
    <property type="term" value="P:DNA recombination"/>
    <property type="evidence" value="ECO:0007669"/>
    <property type="project" value="InterPro"/>
</dbReference>
<dbReference type="GO" id="GO:0006281">
    <property type="term" value="P:DNA repair"/>
    <property type="evidence" value="ECO:0007669"/>
    <property type="project" value="UniProtKB-KW"/>
</dbReference>
<dbReference type="GO" id="GO:0009432">
    <property type="term" value="P:SOS response"/>
    <property type="evidence" value="ECO:0007669"/>
    <property type="project" value="TreeGrafter"/>
</dbReference>
<dbReference type="CDD" id="cd03241">
    <property type="entry name" value="ABC_RecN"/>
    <property type="match status" value="2"/>
</dbReference>
<dbReference type="Gene3D" id="3.40.50.300">
    <property type="entry name" value="P-loop containing nucleotide triphosphate hydrolases"/>
    <property type="match status" value="2"/>
</dbReference>
<dbReference type="InterPro" id="IPR004604">
    <property type="entry name" value="DNA_recomb/repair_RecN"/>
</dbReference>
<dbReference type="InterPro" id="IPR027417">
    <property type="entry name" value="P-loop_NTPase"/>
</dbReference>
<dbReference type="InterPro" id="IPR003395">
    <property type="entry name" value="RecF/RecN/SMC_N"/>
</dbReference>
<dbReference type="NCBIfam" id="TIGR00634">
    <property type="entry name" value="recN"/>
    <property type="match status" value="1"/>
</dbReference>
<dbReference type="PANTHER" id="PTHR11059">
    <property type="entry name" value="DNA REPAIR PROTEIN RECN"/>
    <property type="match status" value="1"/>
</dbReference>
<dbReference type="PANTHER" id="PTHR11059:SF0">
    <property type="entry name" value="DNA REPAIR PROTEIN RECN"/>
    <property type="match status" value="1"/>
</dbReference>
<dbReference type="Pfam" id="PF02463">
    <property type="entry name" value="SMC_N"/>
    <property type="match status" value="1"/>
</dbReference>
<dbReference type="PIRSF" id="PIRSF003128">
    <property type="entry name" value="RecN"/>
    <property type="match status" value="1"/>
</dbReference>
<dbReference type="SUPFAM" id="SSF52540">
    <property type="entry name" value="P-loop containing nucleoside triphosphate hydrolases"/>
    <property type="match status" value="2"/>
</dbReference>
<sequence length="550" mass="61933">MFHSLSVKNFILIDELEIEFTNGLCVITGETGAGKSILLDAILFCLGYKTSSAGIIKHGKDYAAVNIVFSLNDEIKNFLTQNFIELEESLLIKCVQKAEGRKNFFINNQVVNKAIMQQLATYLFELHGQNNNISLLEINTQRDILDSFGDLLELRMQLAKCYQAWQNIRNEIAEIALKQNSIEQEIDYLNFVTEELIKLNVQTGEEEQLTNIRKDLQNKDKDLQLIKDIFEQVNNPEINSSISKAEKLLAKQSQNEEFANISTNLEEAYNNLEEARQNLSNLLENFNKLDYNLEEIEERLFAIKAISRKYNVSADALKTFLEESLNRLNSLKGKIANQAELQVQEAKLSTEYYKLGKDLSGKRLAAAKRLEEVLHHELKQLKMEKATFHVNIAERKEAAAYGIDDIVFKASTNPGMSPEAINKIASGGELSRFMLALKTSLFNKMVKPAIIFDEIDVGIGGEVADKVGERLKKLSSATQVIVITHQPQVAGKADLHIKIEKTQLEKETKVTVKALNLAERQQELARMISGKAITEASLKAAKELLCHPVA</sequence>
<feature type="chain" id="PRO_0000286655" description="DNA repair protein RecN">
    <location>
        <begin position="1"/>
        <end position="550"/>
    </location>
</feature>
<feature type="binding site" evidence="2">
    <location>
        <begin position="29"/>
        <end position="36"/>
    </location>
    <ligand>
        <name>ATP</name>
        <dbReference type="ChEBI" id="CHEBI:30616"/>
    </ligand>
</feature>
<evidence type="ECO:0000250" key="1"/>
<evidence type="ECO:0000255" key="2"/>
<evidence type="ECO:0000305" key="3"/>
<organism>
    <name type="scientific">Rickettsia bellii (strain RML369-C)</name>
    <dbReference type="NCBI Taxonomy" id="336407"/>
    <lineage>
        <taxon>Bacteria</taxon>
        <taxon>Pseudomonadati</taxon>
        <taxon>Pseudomonadota</taxon>
        <taxon>Alphaproteobacteria</taxon>
        <taxon>Rickettsiales</taxon>
        <taxon>Rickettsiaceae</taxon>
        <taxon>Rickettsieae</taxon>
        <taxon>Rickettsia</taxon>
        <taxon>belli group</taxon>
    </lineage>
</organism>
<gene>
    <name type="primary">recN</name>
    <name type="ordered locus">RBE_1101</name>
</gene>
<proteinExistence type="inferred from homology"/>
<comment type="function">
    <text evidence="1">May be involved in recombinational repair of damaged DNA.</text>
</comment>
<comment type="similarity">
    <text evidence="3">Belongs to the RecN family.</text>
</comment>
<keyword id="KW-0067">ATP-binding</keyword>
<keyword id="KW-0227">DNA damage</keyword>
<keyword id="KW-0234">DNA repair</keyword>
<keyword id="KW-0547">Nucleotide-binding</keyword>
<protein>
    <recommendedName>
        <fullName>DNA repair protein RecN</fullName>
    </recommendedName>
    <alternativeName>
        <fullName>Recombination protein N</fullName>
    </alternativeName>
</protein>
<accession>Q1RHI2</accession>